<dbReference type="EC" id="7.-.-.-" evidence="1"/>
<dbReference type="EMBL" id="CP001252">
    <property type="protein sequence ID" value="ACK46772.1"/>
    <property type="molecule type" value="Genomic_DNA"/>
</dbReference>
<dbReference type="RefSeq" id="WP_012587727.1">
    <property type="nucleotide sequence ID" value="NC_011663.1"/>
</dbReference>
<dbReference type="SMR" id="B8E548"/>
<dbReference type="KEGG" id="sbp:Sbal223_2273"/>
<dbReference type="HOGENOM" id="CLU_095255_1_0_6"/>
<dbReference type="Proteomes" id="UP000002507">
    <property type="component" value="Chromosome"/>
</dbReference>
<dbReference type="GO" id="GO:0005886">
    <property type="term" value="C:plasma membrane"/>
    <property type="evidence" value="ECO:0007669"/>
    <property type="project" value="UniProtKB-SubCell"/>
</dbReference>
<dbReference type="GO" id="GO:0022900">
    <property type="term" value="P:electron transport chain"/>
    <property type="evidence" value="ECO:0007669"/>
    <property type="project" value="UniProtKB-UniRule"/>
</dbReference>
<dbReference type="HAMAP" id="MF_00459">
    <property type="entry name" value="RsxA_RnfA"/>
    <property type="match status" value="1"/>
</dbReference>
<dbReference type="InterPro" id="IPR011293">
    <property type="entry name" value="Ion_transpt_RnfA/RsxA"/>
</dbReference>
<dbReference type="InterPro" id="IPR003667">
    <property type="entry name" value="NqrDE/RnfAE"/>
</dbReference>
<dbReference type="InterPro" id="IPR050133">
    <property type="entry name" value="NqrDE/RnfAE_oxidrdctase"/>
</dbReference>
<dbReference type="NCBIfam" id="NF003481">
    <property type="entry name" value="PRK05151.1"/>
    <property type="match status" value="1"/>
</dbReference>
<dbReference type="NCBIfam" id="TIGR01943">
    <property type="entry name" value="rnfA"/>
    <property type="match status" value="1"/>
</dbReference>
<dbReference type="PANTHER" id="PTHR30335">
    <property type="entry name" value="INTEGRAL MEMBRANE PROTEIN OF SOXR-REDUCING COMPLEX"/>
    <property type="match status" value="1"/>
</dbReference>
<dbReference type="PANTHER" id="PTHR30335:SF0">
    <property type="entry name" value="ION-TRANSLOCATING OXIDOREDUCTASE COMPLEX SUBUNIT A"/>
    <property type="match status" value="1"/>
</dbReference>
<dbReference type="Pfam" id="PF02508">
    <property type="entry name" value="Rnf-Nqr"/>
    <property type="match status" value="1"/>
</dbReference>
<dbReference type="PIRSF" id="PIRSF006102">
    <property type="entry name" value="NQR_DE"/>
    <property type="match status" value="1"/>
</dbReference>
<comment type="function">
    <text evidence="1">Part of a membrane-bound complex that couples electron transfer with translocation of ions across the membrane.</text>
</comment>
<comment type="subunit">
    <text evidence="1">The complex is composed of six subunits: RnfA, RnfB, RnfC, RnfD, RnfE and RnfG.</text>
</comment>
<comment type="subcellular location">
    <subcellularLocation>
        <location evidence="1">Cell inner membrane</location>
        <topology evidence="1">Multi-pass membrane protein</topology>
    </subcellularLocation>
</comment>
<comment type="similarity">
    <text evidence="1">Belongs to the NqrDE/RnfAE family.</text>
</comment>
<accession>B8E548</accession>
<gene>
    <name evidence="1" type="primary">rnfA</name>
    <name type="ordered locus">Sbal223_2273</name>
</gene>
<keyword id="KW-0997">Cell inner membrane</keyword>
<keyword id="KW-1003">Cell membrane</keyword>
<keyword id="KW-0249">Electron transport</keyword>
<keyword id="KW-0472">Membrane</keyword>
<keyword id="KW-1278">Translocase</keyword>
<keyword id="KW-0812">Transmembrane</keyword>
<keyword id="KW-1133">Transmembrane helix</keyword>
<keyword id="KW-0813">Transport</keyword>
<feature type="chain" id="PRO_1000191740" description="Ion-translocating oxidoreductase complex subunit A">
    <location>
        <begin position="1"/>
        <end position="192"/>
    </location>
</feature>
<feature type="transmembrane region" description="Helical" evidence="1">
    <location>
        <begin position="5"/>
        <end position="25"/>
    </location>
</feature>
<feature type="transmembrane region" description="Helical" evidence="1">
    <location>
        <begin position="39"/>
        <end position="59"/>
    </location>
</feature>
<feature type="transmembrane region" description="Helical" evidence="1">
    <location>
        <begin position="65"/>
        <end position="85"/>
    </location>
</feature>
<feature type="transmembrane region" description="Helical" evidence="1">
    <location>
        <begin position="102"/>
        <end position="122"/>
    </location>
</feature>
<feature type="transmembrane region" description="Helical" evidence="1">
    <location>
        <begin position="134"/>
        <end position="154"/>
    </location>
</feature>
<feature type="transmembrane region" description="Helical" evidence="1">
    <location>
        <begin position="171"/>
        <end position="191"/>
    </location>
</feature>
<organism>
    <name type="scientific">Shewanella baltica (strain OS223)</name>
    <dbReference type="NCBI Taxonomy" id="407976"/>
    <lineage>
        <taxon>Bacteria</taxon>
        <taxon>Pseudomonadati</taxon>
        <taxon>Pseudomonadota</taxon>
        <taxon>Gammaproteobacteria</taxon>
        <taxon>Alteromonadales</taxon>
        <taxon>Shewanellaceae</taxon>
        <taxon>Shewanella</taxon>
    </lineage>
</organism>
<evidence type="ECO:0000255" key="1">
    <source>
        <dbReference type="HAMAP-Rule" id="MF_00459"/>
    </source>
</evidence>
<reference key="1">
    <citation type="submission" date="2008-12" db="EMBL/GenBank/DDBJ databases">
        <title>Complete sequence of chromosome of Shewanella baltica OS223.</title>
        <authorList>
            <consortium name="US DOE Joint Genome Institute"/>
            <person name="Lucas S."/>
            <person name="Copeland A."/>
            <person name="Lapidus A."/>
            <person name="Glavina del Rio T."/>
            <person name="Dalin E."/>
            <person name="Tice H."/>
            <person name="Bruce D."/>
            <person name="Goodwin L."/>
            <person name="Pitluck S."/>
            <person name="Chertkov O."/>
            <person name="Meincke L."/>
            <person name="Brettin T."/>
            <person name="Detter J.C."/>
            <person name="Han C."/>
            <person name="Kuske C.R."/>
            <person name="Larimer F."/>
            <person name="Land M."/>
            <person name="Hauser L."/>
            <person name="Kyrpides N."/>
            <person name="Ovchinnikova G."/>
            <person name="Brettar I."/>
            <person name="Rodrigues J."/>
            <person name="Konstantinidis K."/>
            <person name="Tiedje J."/>
        </authorList>
    </citation>
    <scope>NUCLEOTIDE SEQUENCE [LARGE SCALE GENOMIC DNA]</scope>
    <source>
        <strain>OS223</strain>
    </source>
</reference>
<proteinExistence type="inferred from homology"/>
<name>RNFA_SHEB2</name>
<protein>
    <recommendedName>
        <fullName evidence="1">Ion-translocating oxidoreductase complex subunit A</fullName>
        <ecNumber evidence="1">7.-.-.-</ecNumber>
    </recommendedName>
    <alternativeName>
        <fullName evidence="1">Rnf electron transport complex subunit A</fullName>
    </alternativeName>
</protein>
<sequence length="192" mass="20712">MNEYLLLLISTVLVNNFVLVKFLGLCPFMGVSSKLESAIGMSMATTFVLTLASILSYLVNQYLLLPFDLSYLRTMSFILVIAVVVQFTEMVVQKTSAALHRALGIYLPLITTNCAVLGVALLNVNEKHDFIQSAIFGFGAALGFSLVLILFSAMRERLAAADVPLPFKGGAIAMITAGLMSLAFMGFTGLVK</sequence>